<protein>
    <recommendedName>
        <fullName evidence="1">Phenylalanine--tRNA ligase alpha subunit</fullName>
        <ecNumber evidence="1">6.1.1.20</ecNumber>
    </recommendedName>
    <alternativeName>
        <fullName evidence="1">Phenylalanyl-tRNA synthetase alpha subunit</fullName>
        <shortName evidence="1">PheRS</shortName>
    </alternativeName>
</protein>
<dbReference type="EC" id="6.1.1.20" evidence="1"/>
<dbReference type="EMBL" id="CP001581">
    <property type="protein sequence ID" value="ACO85113.1"/>
    <property type="molecule type" value="Genomic_DNA"/>
</dbReference>
<dbReference type="RefSeq" id="WP_003403382.1">
    <property type="nucleotide sequence ID" value="NC_012563.1"/>
</dbReference>
<dbReference type="SMR" id="C1FKM3"/>
<dbReference type="GeneID" id="5185223"/>
<dbReference type="KEGG" id="cby:CLM_3538"/>
<dbReference type="eggNOG" id="COG0016">
    <property type="taxonomic scope" value="Bacteria"/>
</dbReference>
<dbReference type="HOGENOM" id="CLU_025086_0_1_9"/>
<dbReference type="Proteomes" id="UP000001374">
    <property type="component" value="Chromosome"/>
</dbReference>
<dbReference type="GO" id="GO:0005737">
    <property type="term" value="C:cytoplasm"/>
    <property type="evidence" value="ECO:0007669"/>
    <property type="project" value="UniProtKB-SubCell"/>
</dbReference>
<dbReference type="GO" id="GO:0005524">
    <property type="term" value="F:ATP binding"/>
    <property type="evidence" value="ECO:0007669"/>
    <property type="project" value="UniProtKB-UniRule"/>
</dbReference>
<dbReference type="GO" id="GO:0140096">
    <property type="term" value="F:catalytic activity, acting on a protein"/>
    <property type="evidence" value="ECO:0007669"/>
    <property type="project" value="UniProtKB-ARBA"/>
</dbReference>
<dbReference type="GO" id="GO:0000287">
    <property type="term" value="F:magnesium ion binding"/>
    <property type="evidence" value="ECO:0007669"/>
    <property type="project" value="UniProtKB-UniRule"/>
</dbReference>
<dbReference type="GO" id="GO:0004826">
    <property type="term" value="F:phenylalanine-tRNA ligase activity"/>
    <property type="evidence" value="ECO:0007669"/>
    <property type="project" value="UniProtKB-UniRule"/>
</dbReference>
<dbReference type="GO" id="GO:0016740">
    <property type="term" value="F:transferase activity"/>
    <property type="evidence" value="ECO:0007669"/>
    <property type="project" value="UniProtKB-ARBA"/>
</dbReference>
<dbReference type="GO" id="GO:0000049">
    <property type="term" value="F:tRNA binding"/>
    <property type="evidence" value="ECO:0007669"/>
    <property type="project" value="InterPro"/>
</dbReference>
<dbReference type="GO" id="GO:0006432">
    <property type="term" value="P:phenylalanyl-tRNA aminoacylation"/>
    <property type="evidence" value="ECO:0007669"/>
    <property type="project" value="UniProtKB-UniRule"/>
</dbReference>
<dbReference type="CDD" id="cd00496">
    <property type="entry name" value="PheRS_alpha_core"/>
    <property type="match status" value="1"/>
</dbReference>
<dbReference type="FunFam" id="3.30.930.10:FF:000003">
    <property type="entry name" value="Phenylalanine--tRNA ligase alpha subunit"/>
    <property type="match status" value="1"/>
</dbReference>
<dbReference type="Gene3D" id="3.30.930.10">
    <property type="entry name" value="Bira Bifunctional Protein, Domain 2"/>
    <property type="match status" value="1"/>
</dbReference>
<dbReference type="HAMAP" id="MF_00281">
    <property type="entry name" value="Phe_tRNA_synth_alpha1"/>
    <property type="match status" value="1"/>
</dbReference>
<dbReference type="InterPro" id="IPR006195">
    <property type="entry name" value="aa-tRNA-synth_II"/>
</dbReference>
<dbReference type="InterPro" id="IPR045864">
    <property type="entry name" value="aa-tRNA-synth_II/BPL/LPL"/>
</dbReference>
<dbReference type="InterPro" id="IPR004529">
    <property type="entry name" value="Phe-tRNA-synth_IIc_asu"/>
</dbReference>
<dbReference type="InterPro" id="IPR004188">
    <property type="entry name" value="Phe-tRNA_ligase_II_N"/>
</dbReference>
<dbReference type="InterPro" id="IPR022911">
    <property type="entry name" value="Phe_tRNA_ligase_alpha1_bac"/>
</dbReference>
<dbReference type="InterPro" id="IPR002319">
    <property type="entry name" value="Phenylalanyl-tRNA_Synthase"/>
</dbReference>
<dbReference type="InterPro" id="IPR010978">
    <property type="entry name" value="tRNA-bd_arm"/>
</dbReference>
<dbReference type="NCBIfam" id="TIGR00468">
    <property type="entry name" value="pheS"/>
    <property type="match status" value="1"/>
</dbReference>
<dbReference type="PANTHER" id="PTHR11538:SF41">
    <property type="entry name" value="PHENYLALANINE--TRNA LIGASE, MITOCHONDRIAL"/>
    <property type="match status" value="1"/>
</dbReference>
<dbReference type="PANTHER" id="PTHR11538">
    <property type="entry name" value="PHENYLALANYL-TRNA SYNTHETASE"/>
    <property type="match status" value="1"/>
</dbReference>
<dbReference type="Pfam" id="PF02912">
    <property type="entry name" value="Phe_tRNA-synt_N"/>
    <property type="match status" value="1"/>
</dbReference>
<dbReference type="Pfam" id="PF01409">
    <property type="entry name" value="tRNA-synt_2d"/>
    <property type="match status" value="1"/>
</dbReference>
<dbReference type="SUPFAM" id="SSF55681">
    <property type="entry name" value="Class II aaRS and biotin synthetases"/>
    <property type="match status" value="1"/>
</dbReference>
<dbReference type="SUPFAM" id="SSF46589">
    <property type="entry name" value="tRNA-binding arm"/>
    <property type="match status" value="1"/>
</dbReference>
<dbReference type="PROSITE" id="PS50862">
    <property type="entry name" value="AA_TRNA_LIGASE_II"/>
    <property type="match status" value="1"/>
</dbReference>
<name>SYFA_CLOBJ</name>
<evidence type="ECO:0000255" key="1">
    <source>
        <dbReference type="HAMAP-Rule" id="MF_00281"/>
    </source>
</evidence>
<sequence length="339" mass="38585">MRQKLEEIKNSAINELKTTLSKDQLEAIRVKYLGKKGELTQILRGMGALSQEERPIVGKVANEVRSYIEETIKEAFSDIKNKEKSIRLENETIDITMPGKKQAVGKRHPLDLTLESMKDIFISMGFTIEEGPEVELDKYNFEALNIPKNHPARGEQDTFYINDNLVLRTQTSPIQIRTMENQKPPIKMIAPGKVYRSDSVDATHSPIFYQMEGLVVDKGITFSDLKGTLELFAKRMFGDKVKTKFRPHHFPFTEPSAEMDATCFVCNGEGCKVCKGSGWIELLGCGMVHPQVLRNCNIDPEVYSGFAFGFGVDRMVMMKYGIDDIRLLYESDMRFLNQF</sequence>
<proteinExistence type="inferred from homology"/>
<comment type="catalytic activity">
    <reaction evidence="1">
        <text>tRNA(Phe) + L-phenylalanine + ATP = L-phenylalanyl-tRNA(Phe) + AMP + diphosphate + H(+)</text>
        <dbReference type="Rhea" id="RHEA:19413"/>
        <dbReference type="Rhea" id="RHEA-COMP:9668"/>
        <dbReference type="Rhea" id="RHEA-COMP:9699"/>
        <dbReference type="ChEBI" id="CHEBI:15378"/>
        <dbReference type="ChEBI" id="CHEBI:30616"/>
        <dbReference type="ChEBI" id="CHEBI:33019"/>
        <dbReference type="ChEBI" id="CHEBI:58095"/>
        <dbReference type="ChEBI" id="CHEBI:78442"/>
        <dbReference type="ChEBI" id="CHEBI:78531"/>
        <dbReference type="ChEBI" id="CHEBI:456215"/>
        <dbReference type="EC" id="6.1.1.20"/>
    </reaction>
</comment>
<comment type="cofactor">
    <cofactor evidence="1">
        <name>Mg(2+)</name>
        <dbReference type="ChEBI" id="CHEBI:18420"/>
    </cofactor>
    <text evidence="1">Binds 2 magnesium ions per tetramer.</text>
</comment>
<comment type="subunit">
    <text evidence="1">Tetramer of two alpha and two beta subunits.</text>
</comment>
<comment type="subcellular location">
    <subcellularLocation>
        <location evidence="1">Cytoplasm</location>
    </subcellularLocation>
</comment>
<comment type="similarity">
    <text evidence="1">Belongs to the class-II aminoacyl-tRNA synthetase family. Phe-tRNA synthetase alpha subunit type 1 subfamily.</text>
</comment>
<reference key="1">
    <citation type="submission" date="2008-10" db="EMBL/GenBank/DDBJ databases">
        <title>Genome sequence of Clostridium botulinum A2 Kyoto.</title>
        <authorList>
            <person name="Shrivastava S."/>
            <person name="Brinkac L.M."/>
            <person name="Brown J.L."/>
            <person name="Bruce D."/>
            <person name="Detter C.C."/>
            <person name="Johnson E.A."/>
            <person name="Munk C.A."/>
            <person name="Smith L.A."/>
            <person name="Smith T.J."/>
            <person name="Sutton G."/>
            <person name="Brettin T.S."/>
        </authorList>
    </citation>
    <scope>NUCLEOTIDE SEQUENCE [LARGE SCALE GENOMIC DNA]</scope>
    <source>
        <strain>Kyoto / Type A2</strain>
    </source>
</reference>
<feature type="chain" id="PRO_1000199304" description="Phenylalanine--tRNA ligase alpha subunit">
    <location>
        <begin position="1"/>
        <end position="339"/>
    </location>
</feature>
<feature type="binding site" evidence="1">
    <location>
        <position position="254"/>
    </location>
    <ligand>
        <name>Mg(2+)</name>
        <dbReference type="ChEBI" id="CHEBI:18420"/>
        <note>shared with beta subunit</note>
    </ligand>
</feature>
<accession>C1FKM3</accession>
<keyword id="KW-0030">Aminoacyl-tRNA synthetase</keyword>
<keyword id="KW-0067">ATP-binding</keyword>
<keyword id="KW-0963">Cytoplasm</keyword>
<keyword id="KW-0436">Ligase</keyword>
<keyword id="KW-0460">Magnesium</keyword>
<keyword id="KW-0479">Metal-binding</keyword>
<keyword id="KW-0547">Nucleotide-binding</keyword>
<keyword id="KW-0648">Protein biosynthesis</keyword>
<gene>
    <name evidence="1" type="primary">pheS</name>
    <name type="ordered locus">CLM_3538</name>
</gene>
<organism>
    <name type="scientific">Clostridium botulinum (strain Kyoto / Type A2)</name>
    <dbReference type="NCBI Taxonomy" id="536232"/>
    <lineage>
        <taxon>Bacteria</taxon>
        <taxon>Bacillati</taxon>
        <taxon>Bacillota</taxon>
        <taxon>Clostridia</taxon>
        <taxon>Eubacteriales</taxon>
        <taxon>Clostridiaceae</taxon>
        <taxon>Clostridium</taxon>
    </lineage>
</organism>